<evidence type="ECO:0000255" key="1">
    <source>
        <dbReference type="HAMAP-Rule" id="MF_00502"/>
    </source>
</evidence>
<evidence type="ECO:0000305" key="2"/>
<reference key="1">
    <citation type="journal article" date="2001" name="Proc. Natl. Acad. Sci. U.S.A.">
        <title>Complete genomic sequence of Pasteurella multocida Pm70.</title>
        <authorList>
            <person name="May B.J."/>
            <person name="Zhang Q."/>
            <person name="Li L.L."/>
            <person name="Paustian M.L."/>
            <person name="Whittam T.S."/>
            <person name="Kapur V."/>
        </authorList>
    </citation>
    <scope>NUCLEOTIDE SEQUENCE [LARGE SCALE GENOMIC DNA]</scope>
    <source>
        <strain>Pm70</strain>
    </source>
</reference>
<accession>Q9CP41</accession>
<keyword id="KW-1185">Reference proteome</keyword>
<keyword id="KW-0687">Ribonucleoprotein</keyword>
<keyword id="KW-0689">Ribosomal protein</keyword>
<name>RL31B_PASMU</name>
<protein>
    <recommendedName>
        <fullName evidence="1">Large ribosomal subunit protein bL31B</fullName>
    </recommendedName>
    <alternativeName>
        <fullName evidence="2">50S ribosomal protein L31 type B</fullName>
    </alternativeName>
</protein>
<dbReference type="EMBL" id="AE004439">
    <property type="protein sequence ID" value="AAK02304.1"/>
    <property type="molecule type" value="Genomic_DNA"/>
</dbReference>
<dbReference type="RefSeq" id="WP_005720999.1">
    <property type="nucleotide sequence ID" value="NC_002663.1"/>
</dbReference>
<dbReference type="SMR" id="Q9CP41"/>
<dbReference type="STRING" id="272843.PM0220"/>
<dbReference type="EnsemblBacteria" id="AAK02304">
    <property type="protein sequence ID" value="AAK02304"/>
    <property type="gene ID" value="PM0220"/>
</dbReference>
<dbReference type="KEGG" id="pmu:PM0220"/>
<dbReference type="HOGENOM" id="CLU_114306_2_1_6"/>
<dbReference type="OrthoDB" id="9803251at2"/>
<dbReference type="Proteomes" id="UP000000809">
    <property type="component" value="Chromosome"/>
</dbReference>
<dbReference type="GO" id="GO:1990904">
    <property type="term" value="C:ribonucleoprotein complex"/>
    <property type="evidence" value="ECO:0007669"/>
    <property type="project" value="UniProtKB-KW"/>
</dbReference>
<dbReference type="GO" id="GO:0005840">
    <property type="term" value="C:ribosome"/>
    <property type="evidence" value="ECO:0007669"/>
    <property type="project" value="UniProtKB-KW"/>
</dbReference>
<dbReference type="GO" id="GO:0003735">
    <property type="term" value="F:structural constituent of ribosome"/>
    <property type="evidence" value="ECO:0007669"/>
    <property type="project" value="InterPro"/>
</dbReference>
<dbReference type="GO" id="GO:0006412">
    <property type="term" value="P:translation"/>
    <property type="evidence" value="ECO:0007669"/>
    <property type="project" value="UniProtKB-UniRule"/>
</dbReference>
<dbReference type="Gene3D" id="4.10.830.30">
    <property type="entry name" value="Ribosomal protein L31"/>
    <property type="match status" value="1"/>
</dbReference>
<dbReference type="HAMAP" id="MF_00502">
    <property type="entry name" value="Ribosomal_bL31_2"/>
    <property type="match status" value="1"/>
</dbReference>
<dbReference type="InterPro" id="IPR034704">
    <property type="entry name" value="Ribosomal_bL28/bL31-like_sf"/>
</dbReference>
<dbReference type="InterPro" id="IPR002150">
    <property type="entry name" value="Ribosomal_bL31"/>
</dbReference>
<dbReference type="InterPro" id="IPR027493">
    <property type="entry name" value="Ribosomal_bL31_B"/>
</dbReference>
<dbReference type="InterPro" id="IPR042105">
    <property type="entry name" value="Ribosomal_bL31_sf"/>
</dbReference>
<dbReference type="NCBIfam" id="TIGR00105">
    <property type="entry name" value="L31"/>
    <property type="match status" value="1"/>
</dbReference>
<dbReference type="NCBIfam" id="NF002462">
    <property type="entry name" value="PRK01678.1"/>
    <property type="match status" value="1"/>
</dbReference>
<dbReference type="Pfam" id="PF01197">
    <property type="entry name" value="Ribosomal_L31"/>
    <property type="match status" value="1"/>
</dbReference>
<dbReference type="PRINTS" id="PR01249">
    <property type="entry name" value="RIBOSOMALL31"/>
</dbReference>
<dbReference type="SUPFAM" id="SSF143800">
    <property type="entry name" value="L28p-like"/>
    <property type="match status" value="1"/>
</dbReference>
<dbReference type="PROSITE" id="PS01143">
    <property type="entry name" value="RIBOSOMAL_L31"/>
    <property type="match status" value="1"/>
</dbReference>
<sequence>MKKGIHPENYRTVLFYDSNAKQGFLIRSCARTTTTMKWEDGHEYPVFMCDTSSASHPYYTGKTRQIANEGRASDFVNRYGKFGTLKSK</sequence>
<feature type="chain" id="PRO_0000173244" description="Large ribosomal subunit protein bL31B">
    <location>
        <begin position="1"/>
        <end position="88"/>
    </location>
</feature>
<proteinExistence type="inferred from homology"/>
<comment type="subunit">
    <text evidence="1">Part of the 50S ribosomal subunit.</text>
</comment>
<comment type="similarity">
    <text evidence="1">Belongs to the bacterial ribosomal protein bL31 family. Type B subfamily.</text>
</comment>
<organism>
    <name type="scientific">Pasteurella multocida (strain Pm70)</name>
    <dbReference type="NCBI Taxonomy" id="272843"/>
    <lineage>
        <taxon>Bacteria</taxon>
        <taxon>Pseudomonadati</taxon>
        <taxon>Pseudomonadota</taxon>
        <taxon>Gammaproteobacteria</taxon>
        <taxon>Pasteurellales</taxon>
        <taxon>Pasteurellaceae</taxon>
        <taxon>Pasteurella</taxon>
    </lineage>
</organism>
<gene>
    <name evidence="1" type="primary">rpmE2</name>
    <name type="ordered locus">PM0220</name>
</gene>